<evidence type="ECO:0000255" key="1">
    <source>
        <dbReference type="PROSITE-ProRule" id="PRU00176"/>
    </source>
</evidence>
<evidence type="ECO:0000256" key="2">
    <source>
        <dbReference type="SAM" id="MobiDB-lite"/>
    </source>
</evidence>
<evidence type="ECO:0000269" key="3">
    <source>
    </source>
</evidence>
<evidence type="ECO:0000269" key="4">
    <source>
    </source>
</evidence>
<evidence type="ECO:0000269" key="5">
    <source>
    </source>
</evidence>
<evidence type="ECO:0000305" key="6">
    <source>
    </source>
</evidence>
<evidence type="ECO:0007744" key="7">
    <source>
    </source>
</evidence>
<evidence type="ECO:0007744" key="8">
    <source>
    </source>
</evidence>
<evidence type="ECO:0007744" key="9">
    <source>
    </source>
</evidence>
<evidence type="ECO:0007744" key="10">
    <source>
    </source>
</evidence>
<evidence type="ECO:0007744" key="11">
    <source>
    </source>
</evidence>
<sequence>METSSFENAPPAAINDAQDNNINTETNDQETNQQSIETRDAIDKENGVQTETGENSAKNAEQNVSSTNLNNAPTNGALDDDVIPNAIVIKNIPFAIKKEQLLDIIEEMDLPLPYAFNYHFDNGIFRGLAFANFTTPEETTQVITSLNGKEISGRKLKVEYKKMLPQAERERIEREKREKRGQLEEQHRSSSNLSLDSLSKMSGSGNNNTSNNQLFSTLMNGINANSMMNSPMNNTINNNSSNNNNSGNIILNQPSLSAQHTSSSLYQTNVNNQAQMSTERFYAPLPSTSTLPLPPQQLDFNDPDTLEIYSQLLLFKDREKYYYELAYPMGISASHKRIINVLCSYLGLVEVYDPRFIIIRRKILDHANLQSHLQQQGQMTSAHPLQPNSTGGSMNRSQSYTSLLQAHAAAAANSISNQAVNNSSNSNTINSNNGNGNNVIINNNSASSTPKISSQGQFSMQPTLTSPKMNIHHSSQYNSADQPQQPQPQTQQNVQSAAQQQQSFLRQQATLTPSSRIPSGYSANHYQINSVNPLLRNSQISPPNSQIPINSQTLSQAQPPAQSQTQQRVPVAYQNASLSSQQLYNLNGPSSANSQSQLLPQHTNGSVHSNFSYQSYHDESMLSAHNLNSADLIYKSLSHSGLDDGLEQGLNRSLSGLDLQNQNKKNLW</sequence>
<proteinExistence type="evidence at protein level"/>
<gene>
    <name type="primary">PIN4</name>
    <name type="synonym">MDT1</name>
    <name type="ordered locus">YBL051C</name>
    <name type="ORF">YBL0506</name>
    <name type="ORF">YBL0516</name>
</gene>
<feature type="chain" id="PRO_0000082028" description="RNA-binding protein PIN4">
    <location>
        <begin position="1"/>
        <end position="668"/>
    </location>
</feature>
<feature type="domain" description="RRM" evidence="1">
    <location>
        <begin position="85"/>
        <end position="163"/>
    </location>
</feature>
<feature type="region of interest" description="Disordered" evidence="2">
    <location>
        <begin position="1"/>
        <end position="77"/>
    </location>
</feature>
<feature type="region of interest" description="Disordered" evidence="2">
    <location>
        <begin position="168"/>
        <end position="214"/>
    </location>
</feature>
<feature type="region of interest" description="Disordered" evidence="2">
    <location>
        <begin position="374"/>
        <end position="398"/>
    </location>
</feature>
<feature type="region of interest" description="Disordered" evidence="2">
    <location>
        <begin position="420"/>
        <end position="570"/>
    </location>
</feature>
<feature type="compositionally biased region" description="Low complexity" evidence="2">
    <location>
        <begin position="8"/>
        <end position="23"/>
    </location>
</feature>
<feature type="compositionally biased region" description="Polar residues" evidence="2">
    <location>
        <begin position="24"/>
        <end position="36"/>
    </location>
</feature>
<feature type="compositionally biased region" description="Basic and acidic residues" evidence="2">
    <location>
        <begin position="37"/>
        <end position="46"/>
    </location>
</feature>
<feature type="compositionally biased region" description="Polar residues" evidence="2">
    <location>
        <begin position="47"/>
        <end position="74"/>
    </location>
</feature>
<feature type="compositionally biased region" description="Basic and acidic residues" evidence="2">
    <location>
        <begin position="168"/>
        <end position="188"/>
    </location>
</feature>
<feature type="compositionally biased region" description="Low complexity" evidence="2">
    <location>
        <begin position="189"/>
        <end position="212"/>
    </location>
</feature>
<feature type="compositionally biased region" description="Low complexity" evidence="2">
    <location>
        <begin position="420"/>
        <end position="449"/>
    </location>
</feature>
<feature type="compositionally biased region" description="Polar residues" evidence="2">
    <location>
        <begin position="450"/>
        <end position="478"/>
    </location>
</feature>
<feature type="compositionally biased region" description="Low complexity" evidence="2">
    <location>
        <begin position="479"/>
        <end position="508"/>
    </location>
</feature>
<feature type="compositionally biased region" description="Polar residues" evidence="2">
    <location>
        <begin position="509"/>
        <end position="551"/>
    </location>
</feature>
<feature type="compositionally biased region" description="Low complexity" evidence="2">
    <location>
        <begin position="552"/>
        <end position="567"/>
    </location>
</feature>
<feature type="modified residue" description="Phosphoserine" evidence="10">
    <location>
        <position position="56"/>
    </location>
</feature>
<feature type="modified residue" description="Phosphoserine" evidence="9 11">
    <location>
        <position position="189"/>
    </location>
</feature>
<feature type="modified residue" description="Phosphoserine" evidence="11">
    <location>
        <position position="191"/>
    </location>
</feature>
<feature type="modified residue" description="Phosphoserine" evidence="11">
    <location>
        <position position="194"/>
    </location>
</feature>
<feature type="modified residue" description="Phosphoserine" evidence="8 11">
    <location>
        <position position="197"/>
    </location>
</feature>
<feature type="modified residue" description="Phosphothreonine" evidence="6">
    <location>
        <position position="305"/>
    </location>
</feature>
<feature type="modified residue" description="Phosphoserine" evidence="11">
    <location>
        <position position="393"/>
    </location>
</feature>
<feature type="modified residue" description="Phosphoserine" evidence="9 11">
    <location>
        <position position="466"/>
    </location>
</feature>
<feature type="modified residue" description="Phosphoserine" evidence="7">
    <location>
        <position position="541"/>
    </location>
</feature>
<feature type="modified residue" description="Phosphoserine" evidence="11">
    <location>
        <position position="636"/>
    </location>
</feature>
<feature type="modified residue" description="Phosphoserine" evidence="7 11">
    <location>
        <position position="638"/>
    </location>
</feature>
<feature type="modified residue" description="Phosphoserine" evidence="11">
    <location>
        <position position="640"/>
    </location>
</feature>
<feature type="modified residue" description="Phosphoserine" evidence="10 11">
    <location>
        <position position="653"/>
    </location>
</feature>
<feature type="modified residue" description="Phosphoserine" evidence="10 11">
    <location>
        <position position="655"/>
    </location>
</feature>
<feature type="mutagenesis site" description="No interaction with RAD53." evidence="5">
    <original>T</original>
    <variation>A</variation>
    <location>
        <position position="305"/>
    </location>
</feature>
<organism>
    <name type="scientific">Saccharomyces cerevisiae (strain ATCC 204508 / S288c)</name>
    <name type="common">Baker's yeast</name>
    <dbReference type="NCBI Taxonomy" id="559292"/>
    <lineage>
        <taxon>Eukaryota</taxon>
        <taxon>Fungi</taxon>
        <taxon>Dikarya</taxon>
        <taxon>Ascomycota</taxon>
        <taxon>Saccharomycotina</taxon>
        <taxon>Saccharomycetes</taxon>
        <taxon>Saccharomycetales</taxon>
        <taxon>Saccharomycetaceae</taxon>
        <taxon>Saccharomyces</taxon>
    </lineage>
</organism>
<accession>P34217</accession>
<accession>D6VPU8</accession>
<protein>
    <recommendedName>
        <fullName>RNA-binding protein PIN4</fullName>
    </recommendedName>
    <alternativeName>
        <fullName>Psi inducibility protein 4</fullName>
    </alternativeName>
</protein>
<dbReference type="EMBL" id="Z23261">
    <property type="protein sequence ID" value="CAA80795.1"/>
    <property type="molecule type" value="Genomic_DNA"/>
</dbReference>
<dbReference type="EMBL" id="Z35812">
    <property type="protein sequence ID" value="CAA84871.1"/>
    <property type="molecule type" value="Genomic_DNA"/>
</dbReference>
<dbReference type="EMBL" id="BK006936">
    <property type="protein sequence ID" value="DAA07068.1"/>
    <property type="molecule type" value="Genomic_DNA"/>
</dbReference>
<dbReference type="PIR" id="S39836">
    <property type="entry name" value="S39836"/>
</dbReference>
<dbReference type="RefSeq" id="NP_009502.1">
    <property type="nucleotide sequence ID" value="NM_001178291.1"/>
</dbReference>
<dbReference type="PDB" id="2A0T">
    <property type="method" value="NMR"/>
    <property type="chains" value="B=301-310"/>
</dbReference>
<dbReference type="PDBsum" id="2A0T"/>
<dbReference type="SMR" id="P34217"/>
<dbReference type="BioGRID" id="32647">
    <property type="interactions" value="333"/>
</dbReference>
<dbReference type="DIP" id="DIP-1905N"/>
<dbReference type="ELM" id="P34217"/>
<dbReference type="FunCoup" id="P34217">
    <property type="interactions" value="399"/>
</dbReference>
<dbReference type="IntAct" id="P34217">
    <property type="interactions" value="45"/>
</dbReference>
<dbReference type="MINT" id="P34217"/>
<dbReference type="STRING" id="4932.YBL051C"/>
<dbReference type="GlyGen" id="P34217">
    <property type="glycosylation" value="2 sites, 1 O-linked glycan (2 sites)"/>
</dbReference>
<dbReference type="iPTMnet" id="P34217"/>
<dbReference type="PaxDb" id="4932-YBL051C"/>
<dbReference type="PeptideAtlas" id="P34217"/>
<dbReference type="EnsemblFungi" id="YBL051C_mRNA">
    <property type="protein sequence ID" value="YBL051C"/>
    <property type="gene ID" value="YBL051C"/>
</dbReference>
<dbReference type="GeneID" id="852229"/>
<dbReference type="KEGG" id="sce:YBL051C"/>
<dbReference type="AGR" id="SGD:S000000147"/>
<dbReference type="SGD" id="S000000147">
    <property type="gene designation" value="PIN4"/>
</dbReference>
<dbReference type="VEuPathDB" id="FungiDB:YBL051C"/>
<dbReference type="eggNOG" id="KOG0108">
    <property type="taxonomic scope" value="Eukaryota"/>
</dbReference>
<dbReference type="HOGENOM" id="CLU_029387_0_0_1"/>
<dbReference type="InParanoid" id="P34217"/>
<dbReference type="OMA" id="PRFIIIR"/>
<dbReference type="OrthoDB" id="434258at2759"/>
<dbReference type="BioCyc" id="YEAST:G3O-28950-MONOMER"/>
<dbReference type="BioGRID-ORCS" id="852229">
    <property type="hits" value="4 hits in 10 CRISPR screens"/>
</dbReference>
<dbReference type="EvolutionaryTrace" id="P34217"/>
<dbReference type="PRO" id="PR:P34217"/>
<dbReference type="Proteomes" id="UP000002311">
    <property type="component" value="Chromosome II"/>
</dbReference>
<dbReference type="RNAct" id="P34217">
    <property type="molecule type" value="protein"/>
</dbReference>
<dbReference type="GO" id="GO:0005737">
    <property type="term" value="C:cytoplasm"/>
    <property type="evidence" value="ECO:0000314"/>
    <property type="project" value="SGD"/>
</dbReference>
<dbReference type="GO" id="GO:0005634">
    <property type="term" value="C:nucleus"/>
    <property type="evidence" value="ECO:0000318"/>
    <property type="project" value="GO_Central"/>
</dbReference>
<dbReference type="GO" id="GO:0003729">
    <property type="term" value="F:mRNA binding"/>
    <property type="evidence" value="ECO:0007005"/>
    <property type="project" value="SGD"/>
</dbReference>
<dbReference type="GO" id="GO:0000077">
    <property type="term" value="P:DNA damage checkpoint signaling"/>
    <property type="evidence" value="ECO:0000316"/>
    <property type="project" value="SGD"/>
</dbReference>
<dbReference type="GO" id="GO:0000086">
    <property type="term" value="P:G2/M transition of mitotic cell cycle"/>
    <property type="evidence" value="ECO:0000315"/>
    <property type="project" value="SGD"/>
</dbReference>
<dbReference type="CDD" id="cd02639">
    <property type="entry name" value="R3H_RRM"/>
    <property type="match status" value="1"/>
</dbReference>
<dbReference type="CDD" id="cd12253">
    <property type="entry name" value="RRM_PIN4_like"/>
    <property type="match status" value="1"/>
</dbReference>
<dbReference type="FunFam" id="3.30.70.330:FF:000743">
    <property type="entry name" value="Similar to R3H domain protein"/>
    <property type="match status" value="1"/>
</dbReference>
<dbReference type="Gene3D" id="3.30.70.330">
    <property type="match status" value="1"/>
</dbReference>
<dbReference type="IDEAL" id="IID50186"/>
<dbReference type="InterPro" id="IPR012677">
    <property type="entry name" value="Nucleotide-bd_a/b_plait_sf"/>
</dbReference>
<dbReference type="InterPro" id="IPR034186">
    <property type="entry name" value="PIN4-like_RRM"/>
</dbReference>
<dbReference type="InterPro" id="IPR034069">
    <property type="entry name" value="R3H_Cip2"/>
</dbReference>
<dbReference type="InterPro" id="IPR035979">
    <property type="entry name" value="RBD_domain_sf"/>
</dbReference>
<dbReference type="InterPro" id="IPR000504">
    <property type="entry name" value="RRM_dom"/>
</dbReference>
<dbReference type="InterPro" id="IPR050374">
    <property type="entry name" value="RRT5_SRSF_SR"/>
</dbReference>
<dbReference type="PANTHER" id="PTHR23003">
    <property type="entry name" value="RNA RECOGNITION MOTIF RRM DOMAIN CONTAINING PROTEIN"/>
    <property type="match status" value="1"/>
</dbReference>
<dbReference type="PANTHER" id="PTHR23003:SF17">
    <property type="entry name" value="RNA-BINDING PROTEIN PIN4"/>
    <property type="match status" value="1"/>
</dbReference>
<dbReference type="Pfam" id="PF00076">
    <property type="entry name" value="RRM_1"/>
    <property type="match status" value="1"/>
</dbReference>
<dbReference type="SMART" id="SM00360">
    <property type="entry name" value="RRM"/>
    <property type="match status" value="1"/>
</dbReference>
<dbReference type="SUPFAM" id="SSF54928">
    <property type="entry name" value="RNA-binding domain, RBD"/>
    <property type="match status" value="1"/>
</dbReference>
<dbReference type="PROSITE" id="PS50102">
    <property type="entry name" value="RRM"/>
    <property type="match status" value="1"/>
</dbReference>
<comment type="function">
    <text evidence="5">Involved in normal G2/M phase transition of the mitotic cell cycle. In association with RAD53, also involved in checkpoint control in response to DNA damage.</text>
</comment>
<comment type="subunit">
    <text evidence="5">Interacts with RAD53.</text>
</comment>
<comment type="interaction">
    <interactant intactId="EBI-21256">
        <id>P34217</id>
    </interactant>
    <interactant intactId="EBI-17843">
        <id>P22216</id>
        <label>RAD53</label>
    </interactant>
    <organismsDiffer>false</organismsDiffer>
    <experiments>3</experiments>
</comment>
<comment type="subcellular location">
    <subcellularLocation>
        <location evidence="3">Cytoplasm</location>
    </subcellularLocation>
</comment>
<comment type="PTM">
    <text evidence="5">Hyperphosphorylated in response to DNA damage by MEC1.</text>
</comment>
<comment type="miscellaneous">
    <text evidence="4">Present with 4630 molecules/cell in log phase SD medium.</text>
</comment>
<reference key="1">
    <citation type="journal article" date="1993" name="Yeast">
        <title>Sequencing and functional analysis of a 32,560 bp segment on the left arm of yeast chromosome II. Identification of 26 open reading frames, including the KIP1 and SEC17 genes.</title>
        <authorList>
            <person name="Scherens B."/>
            <person name="el Bakkoury M."/>
            <person name="Vierendeels F."/>
            <person name="Dubois E."/>
            <person name="Messenguy F."/>
        </authorList>
    </citation>
    <scope>NUCLEOTIDE SEQUENCE [GENOMIC DNA]</scope>
    <source>
        <strain>ATCC 204508 / S288c</strain>
    </source>
</reference>
<reference key="2">
    <citation type="journal article" date="1994" name="EMBO J.">
        <title>Complete DNA sequence of yeast chromosome II.</title>
        <authorList>
            <person name="Feldmann H."/>
            <person name="Aigle M."/>
            <person name="Aljinovic G."/>
            <person name="Andre B."/>
            <person name="Baclet M.C."/>
            <person name="Barthe C."/>
            <person name="Baur A."/>
            <person name="Becam A.-M."/>
            <person name="Biteau N."/>
            <person name="Boles E."/>
            <person name="Brandt T."/>
            <person name="Brendel M."/>
            <person name="Brueckner M."/>
            <person name="Bussereau F."/>
            <person name="Christiansen C."/>
            <person name="Contreras R."/>
            <person name="Crouzet M."/>
            <person name="Cziepluch C."/>
            <person name="Demolis N."/>
            <person name="Delaveau T."/>
            <person name="Doignon F."/>
            <person name="Domdey H."/>
            <person name="Duesterhus S."/>
            <person name="Dubois E."/>
            <person name="Dujon B."/>
            <person name="El Bakkoury M."/>
            <person name="Entian K.-D."/>
            <person name="Feuermann M."/>
            <person name="Fiers W."/>
            <person name="Fobo G.M."/>
            <person name="Fritz C."/>
            <person name="Gassenhuber J."/>
            <person name="Glansdorff N."/>
            <person name="Goffeau A."/>
            <person name="Grivell L.A."/>
            <person name="de Haan M."/>
            <person name="Hein C."/>
            <person name="Herbert C.J."/>
            <person name="Hollenberg C.P."/>
            <person name="Holmstroem K."/>
            <person name="Jacq C."/>
            <person name="Jacquet M."/>
            <person name="Jauniaux J.-C."/>
            <person name="Jonniaux J.-L."/>
            <person name="Kallesoee T."/>
            <person name="Kiesau P."/>
            <person name="Kirchrath L."/>
            <person name="Koetter P."/>
            <person name="Korol S."/>
            <person name="Liebl S."/>
            <person name="Logghe M."/>
            <person name="Lohan A.J.E."/>
            <person name="Louis E.J."/>
            <person name="Li Z.Y."/>
            <person name="Maat M.J."/>
            <person name="Mallet L."/>
            <person name="Mannhaupt G."/>
            <person name="Messenguy F."/>
            <person name="Miosga T."/>
            <person name="Molemans F."/>
            <person name="Mueller S."/>
            <person name="Nasr F."/>
            <person name="Obermaier B."/>
            <person name="Perea J."/>
            <person name="Pierard A."/>
            <person name="Piravandi E."/>
            <person name="Pohl F.M."/>
            <person name="Pohl T.M."/>
            <person name="Potier S."/>
            <person name="Proft M."/>
            <person name="Purnelle B."/>
            <person name="Ramezani Rad M."/>
            <person name="Rieger M."/>
            <person name="Rose M."/>
            <person name="Schaaff-Gerstenschlaeger I."/>
            <person name="Scherens B."/>
            <person name="Schwarzlose C."/>
            <person name="Skala J."/>
            <person name="Slonimski P.P."/>
            <person name="Smits P.H.M."/>
            <person name="Souciet J.-L."/>
            <person name="Steensma H.Y."/>
            <person name="Stucka R."/>
            <person name="Urrestarazu L.A."/>
            <person name="van der Aart Q.J.M."/>
            <person name="Van Dyck L."/>
            <person name="Vassarotti A."/>
            <person name="Vetter I."/>
            <person name="Vierendeels F."/>
            <person name="Vissers S."/>
            <person name="Wagner G."/>
            <person name="de Wergifosse P."/>
            <person name="Wolfe K.H."/>
            <person name="Zagulski M."/>
            <person name="Zimmermann F.K."/>
            <person name="Mewes H.-W."/>
            <person name="Kleine K."/>
        </authorList>
    </citation>
    <scope>NUCLEOTIDE SEQUENCE [LARGE SCALE GENOMIC DNA]</scope>
    <source>
        <strain>ATCC 204508 / S288c</strain>
    </source>
</reference>
<reference key="3">
    <citation type="journal article" date="2014" name="G3 (Bethesda)">
        <title>The reference genome sequence of Saccharomyces cerevisiae: Then and now.</title>
        <authorList>
            <person name="Engel S.R."/>
            <person name="Dietrich F.S."/>
            <person name="Fisk D.G."/>
            <person name="Binkley G."/>
            <person name="Balakrishnan R."/>
            <person name="Costanzo M.C."/>
            <person name="Dwight S.S."/>
            <person name="Hitz B.C."/>
            <person name="Karra K."/>
            <person name="Nash R.S."/>
            <person name="Weng S."/>
            <person name="Wong E.D."/>
            <person name="Lloyd P."/>
            <person name="Skrzypek M.S."/>
            <person name="Miyasato S.R."/>
            <person name="Simison M."/>
            <person name="Cherry J.M."/>
        </authorList>
    </citation>
    <scope>GENOME REANNOTATION</scope>
    <source>
        <strain>ATCC 204508 / S288c</strain>
    </source>
</reference>
<reference key="4">
    <citation type="journal article" date="2003" name="Nature">
        <title>Global analysis of protein localization in budding yeast.</title>
        <authorList>
            <person name="Huh W.-K."/>
            <person name="Falvo J.V."/>
            <person name="Gerke L.C."/>
            <person name="Carroll A.S."/>
            <person name="Howson R.W."/>
            <person name="Weissman J.S."/>
            <person name="O'Shea E.K."/>
        </authorList>
    </citation>
    <scope>SUBCELLULAR LOCATION [LARGE SCALE ANALYSIS]</scope>
</reference>
<reference key="5">
    <citation type="journal article" date="2003" name="Nature">
        <title>Global analysis of protein expression in yeast.</title>
        <authorList>
            <person name="Ghaemmaghami S."/>
            <person name="Huh W.-K."/>
            <person name="Bower K."/>
            <person name="Howson R.W."/>
            <person name="Belle A."/>
            <person name="Dephoure N."/>
            <person name="O'Shea E.K."/>
            <person name="Weissman J.S."/>
        </authorList>
    </citation>
    <scope>LEVEL OF PROTEIN EXPRESSION [LARGE SCALE ANALYSIS]</scope>
</reference>
<reference key="6">
    <citation type="journal article" date="2004" name="Mol. Cell. Biol.">
        <title>Mdt1, a novel Rad53 FHA1 domain-interacting protein, modulates DNA damage tolerance and G(2)/M cell cycle progression in Saccharomyces cerevisiae.</title>
        <authorList>
            <person name="Pike B.L."/>
            <person name="Yongkiettrakul S."/>
            <person name="Tsai M.-D."/>
            <person name="Heierhorst J."/>
        </authorList>
    </citation>
    <scope>FUNCTION</scope>
    <scope>INTERACTION WITH RAD53</scope>
    <scope>PHOSPHORYLATION AT THR-305</scope>
    <scope>MUTAGENESIS OF THR-305</scope>
</reference>
<reference key="7">
    <citation type="journal article" date="2005" name="Mol. Cell. Proteomics">
        <title>Quantitative phosphoproteomics applied to the yeast pheromone signaling pathway.</title>
        <authorList>
            <person name="Gruhler A."/>
            <person name="Olsen J.V."/>
            <person name="Mohammed S."/>
            <person name="Mortensen P."/>
            <person name="Faergeman N.J."/>
            <person name="Mann M."/>
            <person name="Jensen O.N."/>
        </authorList>
    </citation>
    <scope>PHOSPHORYLATION [LARGE SCALE ANALYSIS] AT SER-541 AND SER-638</scope>
    <scope>IDENTIFICATION BY MASS SPECTROMETRY [LARGE SCALE ANALYSIS]</scope>
    <source>
        <strain>YAL6B</strain>
    </source>
</reference>
<reference key="8">
    <citation type="journal article" date="2007" name="J. Proteome Res.">
        <title>Large-scale phosphorylation analysis of alpha-factor-arrested Saccharomyces cerevisiae.</title>
        <authorList>
            <person name="Li X."/>
            <person name="Gerber S.A."/>
            <person name="Rudner A.D."/>
            <person name="Beausoleil S.A."/>
            <person name="Haas W."/>
            <person name="Villen J."/>
            <person name="Elias J.E."/>
            <person name="Gygi S.P."/>
        </authorList>
    </citation>
    <scope>PHOSPHORYLATION [LARGE SCALE ANALYSIS] AT SER-189 AND SER-466</scope>
    <scope>IDENTIFICATION BY MASS SPECTROMETRY [LARGE SCALE ANALYSIS]</scope>
    <source>
        <strain>ADR376</strain>
    </source>
</reference>
<reference key="9">
    <citation type="journal article" date="2007" name="Proc. Natl. Acad. Sci. U.S.A.">
        <title>Analysis of phosphorylation sites on proteins from Saccharomyces cerevisiae by electron transfer dissociation (ETD) mass spectrometry.</title>
        <authorList>
            <person name="Chi A."/>
            <person name="Huttenhower C."/>
            <person name="Geer L.Y."/>
            <person name="Coon J.J."/>
            <person name="Syka J.E.P."/>
            <person name="Bai D.L."/>
            <person name="Shabanowitz J."/>
            <person name="Burke D.J."/>
            <person name="Troyanskaya O.G."/>
            <person name="Hunt D.F."/>
        </authorList>
    </citation>
    <scope>PHOSPHORYLATION [LARGE SCALE ANALYSIS] AT SER-197</scope>
    <scope>IDENTIFICATION BY MASS SPECTROMETRY [LARGE SCALE ANALYSIS]</scope>
</reference>
<reference key="10">
    <citation type="journal article" date="2008" name="Mol. Cell. Proteomics">
        <title>A multidimensional chromatography technology for in-depth phosphoproteome analysis.</title>
        <authorList>
            <person name="Albuquerque C.P."/>
            <person name="Smolka M.B."/>
            <person name="Payne S.H."/>
            <person name="Bafna V."/>
            <person name="Eng J."/>
            <person name="Zhou H."/>
        </authorList>
    </citation>
    <scope>PHOSPHORYLATION [LARGE SCALE ANALYSIS] AT SER-56; SER-653 AND SER-655</scope>
    <scope>IDENTIFICATION BY MASS SPECTROMETRY [LARGE SCALE ANALYSIS]</scope>
</reference>
<reference key="11">
    <citation type="journal article" date="2009" name="Science">
        <title>Global analysis of Cdk1 substrate phosphorylation sites provides insights into evolution.</title>
        <authorList>
            <person name="Holt L.J."/>
            <person name="Tuch B.B."/>
            <person name="Villen J."/>
            <person name="Johnson A.D."/>
            <person name="Gygi S.P."/>
            <person name="Morgan D.O."/>
        </authorList>
    </citation>
    <scope>PHOSPHORYLATION [LARGE SCALE ANALYSIS] AT SER-189; SER-191; SER-194; SER-197; SER-393; SER-466; SER-636; SER-638; SER-640; SER-653 AND SER-655</scope>
    <scope>IDENTIFICATION BY MASS SPECTROMETRY [LARGE SCALE ANALYSIS]</scope>
</reference>
<keyword id="KW-0002">3D-structure</keyword>
<keyword id="KW-0963">Cytoplasm</keyword>
<keyword id="KW-0597">Phosphoprotein</keyword>
<keyword id="KW-1185">Reference proteome</keyword>
<keyword id="KW-0694">RNA-binding</keyword>
<name>PIN4_YEAST</name>